<feature type="chain" id="PRO_0000238706" description="Capsid protein">
    <location>
        <begin position="1"/>
        <end position="267"/>
    </location>
</feature>
<feature type="chain" id="PRO_0000238707" description="Precursor of protein E3/E2" evidence="1">
    <location>
        <begin position="268"/>
        <end position="751"/>
    </location>
</feature>
<feature type="chain" id="PRO_0000238708" description="Assembly protein E3">
    <location>
        <begin position="268"/>
        <end position="328"/>
    </location>
</feature>
<feature type="chain" id="PRO_0000238709" description="Spike glycoprotein E2">
    <location>
        <begin position="329"/>
        <end position="751"/>
    </location>
</feature>
<feature type="chain" id="PRO_0000238710" description="6K protein">
    <location>
        <begin position="752"/>
        <end position="806"/>
    </location>
</feature>
<feature type="chain" id="PRO_0000238711" description="Spike glycoprotein E1">
    <location>
        <begin position="807"/>
        <end position="1244"/>
    </location>
</feature>
<feature type="topological domain" description="Extracellular" evidence="10">
    <location>
        <begin position="268"/>
        <end position="696"/>
    </location>
</feature>
<feature type="transmembrane region" description="Helical" evidence="10">
    <location>
        <begin position="697"/>
        <end position="717"/>
    </location>
</feature>
<feature type="topological domain" description="Cytoplasmic" evidence="10">
    <location>
        <begin position="718"/>
        <end position="751"/>
    </location>
</feature>
<feature type="topological domain" description="Extracellular" evidence="10">
    <location>
        <begin position="752"/>
        <end position="764"/>
    </location>
</feature>
<feature type="transmembrane region" description="Helical" evidence="10">
    <location>
        <begin position="765"/>
        <end position="785"/>
    </location>
</feature>
<feature type="transmembrane region" description="Helical" evidence="10">
    <location>
        <begin position="786"/>
        <end position="805"/>
    </location>
</feature>
<feature type="topological domain" description="Extracellular" evidence="10">
    <location>
        <begin position="806"/>
        <end position="1218"/>
    </location>
</feature>
<feature type="transmembrane region" description="Helical" evidence="10">
    <location>
        <begin position="1219"/>
        <end position="1239"/>
    </location>
</feature>
<feature type="topological domain" description="Cytoplasmic" evidence="10">
    <location>
        <begin position="1240"/>
        <end position="1244"/>
    </location>
</feature>
<feature type="domain" description="Peptidase S3" evidence="11">
    <location>
        <begin position="117"/>
        <end position="267"/>
    </location>
</feature>
<feature type="region of interest" description="Disordered" evidence="12">
    <location>
        <begin position="1"/>
        <end position="113"/>
    </location>
</feature>
<feature type="region of interest" description="Host transcription inhibition" evidence="4">
    <location>
        <begin position="35"/>
        <end position="69"/>
    </location>
</feature>
<feature type="region of interest" description="Binding to the viral RNA" evidence="6">
    <location>
        <begin position="85"/>
        <end position="118"/>
    </location>
</feature>
<feature type="region of interest" description="Ribosome-binding" evidence="6">
    <location>
        <begin position="103"/>
        <end position="117"/>
    </location>
</feature>
<feature type="region of interest" description="Interaction with spike glycoprotein E2" evidence="3">
    <location>
        <begin position="160"/>
        <end position="165"/>
    </location>
</feature>
<feature type="region of interest" description="Dimerization of the capsid protein" evidence="5">
    <location>
        <begin position="188"/>
        <end position="198"/>
    </location>
</feature>
<feature type="region of interest" description="Dimerization of the capsid protein" evidence="5">
    <location>
        <begin position="224"/>
        <end position="228"/>
    </location>
</feature>
<feature type="region of interest" description="Interaction with spike glycoprotein E2" evidence="3">
    <location>
        <begin position="252"/>
        <end position="256"/>
    </location>
</feature>
<feature type="region of interest" description="Functions as an uncleaved signal peptide for the precursor of protein E3/E2" evidence="2">
    <location>
        <begin position="268"/>
        <end position="280"/>
    </location>
</feature>
<feature type="region of interest" description="Interaction with the capsid protein" evidence="3">
    <location>
        <begin position="720"/>
        <end position="724"/>
    </location>
</feature>
<feature type="region of interest" description="E1 fusion peptide loop" evidence="9">
    <location>
        <begin position="890"/>
        <end position="907"/>
    </location>
</feature>
<feature type="short sequence motif" description="Nuclear localization signal" evidence="4">
    <location>
        <begin position="62"/>
        <end position="103"/>
    </location>
</feature>
<feature type="short sequence motif" description="Nuclear export signal" evidence="4">
    <location>
        <begin position="149"/>
        <end position="159"/>
    </location>
</feature>
<feature type="compositionally biased region" description="Polar residues" evidence="12">
    <location>
        <begin position="35"/>
        <end position="44"/>
    </location>
</feature>
<feature type="compositionally biased region" description="Basic residues" evidence="12">
    <location>
        <begin position="57"/>
        <end position="81"/>
    </location>
</feature>
<feature type="compositionally biased region" description="Low complexity" evidence="12">
    <location>
        <begin position="82"/>
        <end position="97"/>
    </location>
</feature>
<feature type="compositionally biased region" description="Basic residues" evidence="12">
    <location>
        <begin position="99"/>
        <end position="109"/>
    </location>
</feature>
<feature type="active site" description="Charge relay system" evidence="11 14">
    <location>
        <position position="144"/>
    </location>
</feature>
<feature type="active site" description="Charge relay system" evidence="11 14">
    <location>
        <position position="166"/>
    </location>
</feature>
<feature type="active site" description="Charge relay system" evidence="11 14">
    <location>
        <position position="218"/>
    </location>
</feature>
<feature type="site" description="Involved in dimerization of the capsid protein" evidence="14">
    <location>
        <position position="191"/>
    </location>
</feature>
<feature type="site" description="Involved in dimerization of the capsid protein" evidence="14">
    <location>
        <position position="192"/>
    </location>
</feature>
<feature type="site" description="Involved in dimerization of the capsid protein" evidence="14">
    <location>
        <position position="225"/>
    </location>
</feature>
<feature type="site" description="Cleavage; by autolysis" evidence="16">
    <location>
        <begin position="267"/>
        <end position="268"/>
    </location>
</feature>
<feature type="site" description="Cleavage; by host furin" evidence="2">
    <location>
        <begin position="328"/>
        <end position="329"/>
    </location>
</feature>
<feature type="site" description="Cleavage; by host signal peptidase" evidence="2">
    <location>
        <begin position="752"/>
        <end position="753"/>
    </location>
</feature>
<feature type="site" description="Cleavage; by host signal peptidase" evidence="2">
    <location>
        <begin position="806"/>
        <end position="807"/>
    </location>
</feature>
<feature type="lipid moiety-binding region" description="S-palmitoyl cysteine; by host" evidence="3">
    <location>
        <position position="725"/>
    </location>
</feature>
<feature type="lipid moiety-binding region" description="S-palmitoyl cysteine; by host" evidence="8">
    <location>
        <position position="745"/>
    </location>
</feature>
<feature type="lipid moiety-binding region" description="S-palmitoyl cysteine; by host" evidence="8">
    <location>
        <position position="746"/>
    </location>
</feature>
<feature type="glycosylation site" description="N-linked (GlcNAc...) asparagine; by host" evidence="10">
    <location>
        <position position="279"/>
    </location>
</feature>
<feature type="glycosylation site" description="N-linked (GlcNAc...) asparagine; by host" evidence="10">
    <location>
        <position position="525"/>
    </location>
</feature>
<feature type="glycosylation site" description="N-linked (GlcNAc...) asparagine; by host" evidence="10">
    <location>
        <position position="647"/>
    </location>
</feature>
<feature type="glycosylation site" description="N-linked (GlcNAc...) asparagine; by host" evidence="10">
    <location>
        <position position="945"/>
    </location>
</feature>
<feature type="glycosylation site" description="N-linked (GlcNAc...) asparagine; by host" evidence="10">
    <location>
        <position position="1051"/>
    </location>
</feature>
<feature type="disulfide bond" evidence="3">
    <location>
        <begin position="284"/>
        <end position="290"/>
    </location>
</feature>
<feature type="disulfide bond" evidence="7">
    <location>
        <begin position="481"/>
        <end position="595"/>
    </location>
</feature>
<feature type="disulfide bond" evidence="7">
    <location>
        <begin position="530"/>
        <end position="555"/>
    </location>
</feature>
<feature type="disulfide bond" evidence="7">
    <location>
        <begin position="532"/>
        <end position="549"/>
    </location>
</feature>
<feature type="disulfide bond" evidence="13">
    <location>
        <begin position="725"/>
        <end position="746"/>
    </location>
</feature>
<feature type="disulfide bond" evidence="3">
    <location>
        <begin position="855"/>
        <end position="920"/>
    </location>
</feature>
<feature type="disulfide bond" evidence="3">
    <location>
        <begin position="868"/>
        <end position="900"/>
    </location>
</feature>
<feature type="disulfide bond" evidence="3">
    <location>
        <begin position="869"/>
        <end position="902"/>
    </location>
</feature>
<feature type="disulfide bond" evidence="3">
    <location>
        <begin position="874"/>
        <end position="884"/>
    </location>
</feature>
<feature type="disulfide bond" evidence="3">
    <location>
        <begin position="1065"/>
        <end position="1077"/>
    </location>
</feature>
<feature type="disulfide bond" evidence="3">
    <location>
        <begin position="1106"/>
        <end position="1181"/>
    </location>
</feature>
<feature type="disulfide bond" evidence="3">
    <location>
        <begin position="1111"/>
        <end position="1185"/>
    </location>
</feature>
<feature type="disulfide bond" evidence="3">
    <location>
        <begin position="1133"/>
        <end position="1175"/>
    </location>
</feature>
<feature type="strand" evidence="19">
    <location>
        <begin position="118"/>
        <end position="122"/>
    </location>
</feature>
<feature type="strand" evidence="19">
    <location>
        <begin position="128"/>
        <end position="135"/>
    </location>
</feature>
<feature type="strand" evidence="19">
    <location>
        <begin position="138"/>
        <end position="142"/>
    </location>
</feature>
<feature type="strand" evidence="19">
    <location>
        <begin position="147"/>
        <end position="150"/>
    </location>
</feature>
<feature type="turn" evidence="19">
    <location>
        <begin position="152"/>
        <end position="156"/>
    </location>
</feature>
<feature type="strand" evidence="19">
    <location>
        <begin position="160"/>
        <end position="162"/>
    </location>
</feature>
<feature type="turn" evidence="19">
    <location>
        <begin position="163"/>
        <end position="166"/>
    </location>
</feature>
<feature type="strand" evidence="19">
    <location>
        <begin position="167"/>
        <end position="171"/>
    </location>
</feature>
<feature type="helix" evidence="19">
    <location>
        <begin position="174"/>
        <end position="176"/>
    </location>
</feature>
<feature type="strand" evidence="19">
    <location>
        <begin position="177"/>
        <end position="181"/>
    </location>
</feature>
<feature type="strand" evidence="19">
    <location>
        <begin position="189"/>
        <end position="194"/>
    </location>
</feature>
<feature type="strand" evidence="19">
    <location>
        <begin position="197"/>
        <end position="202"/>
    </location>
</feature>
<feature type="strand" evidence="19">
    <location>
        <begin position="205"/>
        <end position="209"/>
    </location>
</feature>
<feature type="helix" evidence="20">
    <location>
        <begin position="215"/>
        <end position="217"/>
    </location>
</feature>
<feature type="strand" evidence="19">
    <location>
        <begin position="221"/>
        <end position="223"/>
    </location>
</feature>
<feature type="strand" evidence="19">
    <location>
        <begin position="229"/>
        <end position="238"/>
    </location>
</feature>
<feature type="strand" evidence="19">
    <location>
        <begin position="240"/>
        <end position="250"/>
    </location>
</feature>
<feature type="strand" evidence="19">
    <location>
        <begin position="256"/>
        <end position="259"/>
    </location>
</feature>
<keyword id="KW-0002">3D-structure</keyword>
<keyword id="KW-0167">Capsid protein</keyword>
<keyword id="KW-1015">Disulfide bond</keyword>
<keyword id="KW-1170">Fusion of virus membrane with host endosomal membrane</keyword>
<keyword id="KW-1168">Fusion of virus membrane with host membrane</keyword>
<keyword id="KW-0325">Glycoprotein</keyword>
<keyword id="KW-1032">Host cell membrane</keyword>
<keyword id="KW-1035">Host cytoplasm</keyword>
<keyword id="KW-1038">Host endoplasmic reticulum</keyword>
<keyword id="KW-1040">Host Golgi apparatus</keyword>
<keyword id="KW-1043">Host membrane</keyword>
<keyword id="KW-1048">Host nucleus</keyword>
<keyword id="KW-0945">Host-virus interaction</keyword>
<keyword id="KW-0378">Hydrolase</keyword>
<keyword id="KW-0407">Ion channel</keyword>
<keyword id="KW-0406">Ion transport</keyword>
<keyword id="KW-0449">Lipoprotein</keyword>
<keyword id="KW-0472">Membrane</keyword>
<keyword id="KW-0564">Palmitate</keyword>
<keyword id="KW-0645">Protease</keyword>
<keyword id="KW-0694">RNA-binding</keyword>
<keyword id="KW-0720">Serine protease</keyword>
<keyword id="KW-1144">T=4 icosahedral capsid protein</keyword>
<keyword id="KW-0812">Transmembrane</keyword>
<keyword id="KW-1133">Transmembrane helix</keyword>
<keyword id="KW-0813">Transport</keyword>
<keyword id="KW-1161">Viral attachment to host cell</keyword>
<keyword id="KW-1234">Viral attachment to host entry receptor</keyword>
<keyword id="KW-1182">Viral ion channel</keyword>
<keyword id="KW-1162">Viral penetration into host cytoplasm</keyword>
<keyword id="KW-0946">Virion</keyword>
<keyword id="KW-1160">Virus entry into host cell</keyword>
<comment type="function">
    <molecule>Capsid protein</molecule>
    <text evidence="2 3 6 14">Forms an icosahedral capsid with a T=4 symmetry composed of 240 copies of the capsid protein surrounded by a lipid membrane through which penetrate 80 spikes composed of trimers of E1-E2 heterodimers (By similarity). The capsid protein binds to the viral RNA genome at a site adjacent to a ribosome binding site for viral genome translation following genome release (By similarity). Possesses a protease activity that results in its autocatalytic cleavage from the nascent structural protein (PubMed:25100849). Following its self-cleavage, the capsid protein transiently associates with ribosomes, and within several minutes the protein binds to viral RNA and rapidly assembles into icosahedric core particles (By similarity). The resulting nucleocapsid eventually associates with the cytoplasmic domain of the spike glycoprotein E2 at the cell membrane, leading to budding and formation of mature virions (By similarity). In case of infection, new virions attach to target cells and after clathrin-mediated endocytosis their membrane fuses with the host endosomal membrane (By similarity). This leads to the release of the nucleocapsid into the cytoplasm, followed by an uncoating event necessary for the genomic RNA to become accessible (By similarity). The uncoating might be triggered by the interaction of capsid proteins with ribosomes (By similarity). Binding of ribosomes would release the genomic RNA since the same region is genomic RNA-binding and ribosome-binding (By similarity). Specifically inhibits interleukin-1 receptor-associated kinase 1/IRAK1-dependent signaling during viral entry, representing a means by which the alphaviruses may evade innate immune detection and activation prior to viral gene expression (By similarity).</text>
</comment>
<comment type="function">
    <molecule>Assembly protein E3</molecule>
    <text evidence="2">Provides the signal sequence for the translocation of the precursor of protein E3/E2 to the host endoplasmic reticulum. Furin-cleaved E3 remains associated with spike glycoprotein E1 and mediates pH protection of the latter during the transport via the secretory pathway. After virion release from the host cell, the assembly protein E3 is gradually released in the extracellular space.</text>
</comment>
<comment type="function">
    <molecule>Spike glycoprotein E2</molecule>
    <text evidence="2">Plays a role in viral attachment to target host cell, by binding to the cell receptor. Synthesized as a p62 precursor which is processed by furin at the cell membrane just before virion budding, giving rise to E2-E1 heterodimer. The p62-E1 heterodimer is stable, whereas E2-E1 is unstable and dissociate at low pH. p62 is processed at the last step, presumably to avoid E1 fusion activation before its final export to cell surface. E2 C-terminus contains a transitory transmembrane that would be disrupted by palmitoylation, resulting in reorientation of the C-terminal tail from lumenal to cytoplasmic side. This step is critical since E2 C-terminus is involved in budding by interacting with capsid proteins. This release of E2 C-terminus in cytoplasm occurs lately in protein export, and precludes premature assembly of particles at the endoplasmic reticulum membrane.</text>
</comment>
<comment type="function">
    <molecule>6K protein</molecule>
    <text evidence="2 3">Acts as a viroporin that participates in virus glycoprotein processing and transport to the plasma membrane, cell permeabilization and budding of viral particles (By similarity). Disrupts the calcium homeostasis of the cell, probably at the endoplasmic reticulum level. This leads to cytoplasmic calcium elevation (By similarity). Because of its lipophilic properties, the 6K protein is postulated to influence the selection of lipids that interact with the transmembrane domains of the glycoproteins, which, in turn, affects the deformability of the bilayer required for the extreme curvature that occurs as budding proceeds. Present in low amount in virions, about 3% compared to viral glycoproteins (By similarity).</text>
</comment>
<comment type="function">
    <molecule>Spike glycoprotein E1</molecule>
    <text evidence="3">Class II viral fusion protein. Fusion activity is inactive as long as E1 is bound to E2 in mature virion. After virus attachment to target cell and endocytosis, acidification of the endosome induce dissociation of E1/E2 heterodimer and concomitant trimerization of the E1 subunits. This E1 trimer is fusion active, and promotes release of viral nucleocapsid in cytoplasm after endosome and viral membrane fusion. Efficient fusion requires the presence of cholesterol and sphingolipid in the target membrane.</text>
</comment>
<comment type="catalytic activity">
    <reaction evidence="14">
        <text>Autocatalytic release of the core protein from the N-terminus of the togavirus structural polyprotein by hydrolysis of a -Trp-|-Ser- bond.</text>
        <dbReference type="EC" id="3.4.21.90"/>
    </reaction>
</comment>
<comment type="biophysicochemical properties">
    <kinetics>
        <KM evidence="14">2.63 uM for a decapeptide</KM>
    </kinetics>
    <phDependence>
        <text evidence="14">Optimum pH is 7.0.</text>
    </phDependence>
</comment>
<comment type="subunit">
    <molecule>Capsid protein</molecule>
    <text evidence="3 9 14">Homodimer (PubMed:25100849). Homomultimer (By similarity). Interacts with host karyopherin KPNA4; this interaction allows the nuclear import of the viral capsid protein (By similarity). Interacts with spike glycoprotein E2 (By similarity). Interacts with host IRAK1; the interaction leads to inhibition of IRAK1-dependent signaling (By similarity).</text>
</comment>
<comment type="subunit">
    <molecule>Precursor of protein E3/E2</molecule>
    <text evidence="2 3 9">The precursor of protein E3/E2 and E1 form a heterodimer shortly after synthesis (By similarity).</text>
</comment>
<comment type="subunit">
    <molecule>Spike glycoprotein E1</molecule>
    <text evidence="2 3 9">The precursor of protein E3/E2 and E1 form a heterodimer shortly after synthesis (By similarity). Processing of the precursor of protein E3/E2 into E2 and E3 results in a heterodimer of the spike glycoproteins E2 and E1 (By similarity). Spike at virion surface are constituted of a trimer of E2-E1 heterodimers (By similarity). After target cell attachment and endocytosis, E1 change conformation to form homotrimers (By similarity). Interacts with 6K protein (By similarity).</text>
</comment>
<comment type="subunit">
    <molecule>Spike glycoprotein E2</molecule>
    <text evidence="3">Interacts with spike glycoprotein E1 (By similarity). Processing of the precursor of protein E3/E2 into E2 and E3 results in a heterodimer of the spike glycoproteins E2 and E1 (By similarity). Spike at virion surface are constituted of a trimer of E2-E1 heterodimers (By similarity). Interacts with 6K protein (By similarity).</text>
</comment>
<comment type="subunit">
    <molecule>6K protein</molecule>
    <text evidence="3 7">Oligomer (By similarity). Interacts with spike glycoprotein E1. Interacts with spike glycoprotein E2 (By similarity).</text>
</comment>
<comment type="subcellular location">
    <molecule>Capsid protein</molecule>
    <subcellularLocation>
        <location evidence="3">Virion</location>
    </subcellularLocation>
    <subcellularLocation>
        <location evidence="9">Host cytoplasm</location>
    </subcellularLocation>
    <subcellularLocation>
        <location evidence="3">Host cell membrane</location>
    </subcellularLocation>
    <subcellularLocation>
        <location evidence="9">Host nucleus</location>
    </subcellularLocation>
    <text evidence="9">Shuttles between the cytoplasm and the nucleus.</text>
</comment>
<comment type="subcellular location">
    <molecule>Spike glycoprotein E2</molecule>
    <subcellularLocation>
        <location evidence="9">Virion membrane</location>
        <topology evidence="10">Single-pass type I membrane protein</topology>
    </subcellularLocation>
    <subcellularLocation>
        <location evidence="3">Host cell membrane</location>
        <topology evidence="9">Single-pass type I membrane protein</topology>
    </subcellularLocation>
</comment>
<comment type="subcellular location">
    <molecule>6K protein</molecule>
    <subcellularLocation>
        <location evidence="3">Host cell membrane</location>
        <topology evidence="10">Multi-pass membrane protein</topology>
    </subcellularLocation>
    <subcellularLocation>
        <location evidence="3">Virion membrane</location>
        <topology evidence="10">Multi-pass membrane protein</topology>
    </subcellularLocation>
    <subcellularLocation>
        <location evidence="3">Host Golgi apparatus</location>
    </subcellularLocation>
    <subcellularLocation>
        <location>Host Golgi apparatus</location>
        <location>Host trans-Golgi network</location>
    </subcellularLocation>
    <subcellularLocation>
        <location evidence="3">Host endoplasmic reticulum</location>
    </subcellularLocation>
</comment>
<comment type="subcellular location">
    <molecule>Spike glycoprotein E1</molecule>
    <subcellularLocation>
        <location evidence="9">Virion membrane</location>
        <topology evidence="10">Single-pass type I membrane protein</topology>
    </subcellularLocation>
    <subcellularLocation>
        <location evidence="3 9">Host cell membrane</location>
        <topology evidence="10">Single-pass type I membrane protein</topology>
    </subcellularLocation>
</comment>
<comment type="domain">
    <molecule>Capsid protein</molecule>
    <text evidence="3 4">The very N-terminus also plays a role in the particle assembly process (By similarity). The N-terminus also contains a nuclear localization signal and a supra nuclear export signal (supraNES), which is an unusually strong NES that mediates host CRM1 binding in the absence of RanGTP and thus can bind CRM1, not only in the nucleus, but also in the cytoplasm (By similarity). The C-terminus functions as a protease during translation to cleave itself from the translating structural polyprotein (By similarity).</text>
</comment>
<comment type="domain">
    <text evidence="2">Structural polyprotein: As soon as the capsid protein has been autocleaved, an internal uncleaved signal peptide directs the remaining polyprotein to the endoplasmic reticulum.</text>
</comment>
<comment type="PTM">
    <text evidence="2">Structural polyprotein: Specific enzymatic cleavages in vivo yield mature proteins. Capsid protein is auto-cleaved during polyprotein translation, unmasking a signal peptide at the N-terminus of the precursor of E3/E2 (By similarity). The remaining polyprotein is then targeted to the host endoplasmic reticulum, where host signal peptidase cleaves it into pE2, 6K and E1 proteins. pE2 is further processed to mature E3 and E2 by host furin in trans-Golgi vesicle (By similarity).</text>
</comment>
<comment type="PTM">
    <molecule>Spike glycoprotein E2</molecule>
    <text evidence="2">Palmitoylated via thioester bonds. These palmitoylations may induce disruption of the C-terminus transmembrane. This would result in the reorientation of E2 C-terminus from lumenal to cytoplasmic side.</text>
</comment>
<comment type="PTM">
    <molecule>Spike glycoprotein E1</molecule>
    <text evidence="2">N-glycosylated.</text>
</comment>
<comment type="PTM">
    <molecule>Spike glycoprotein E2</molecule>
    <text evidence="2">N-glycosylated.</text>
</comment>
<comment type="PTM">
    <molecule>Assembly protein E3</molecule>
    <text evidence="2">N-glycosylated.</text>
</comment>
<comment type="PTM">
    <molecule>6K protein</molecule>
    <text evidence="2">Palmitoylated via thioester bonds.</text>
</comment>
<comment type="miscellaneous">
    <text evidence="15">Belongs to the Old World alphaviruses that usually cause fever, maculopapular rash, arthralgia and myalgia.</text>
</comment>
<comment type="miscellaneous">
    <text>Structural polyprotein: Translated from a subgenomic RNA synthesized during togavirus replication.</text>
</comment>
<accession>Q86925</accession>
<organismHost>
    <name type="scientific">Aedes</name>
    <dbReference type="NCBI Taxonomy" id="7158"/>
</organismHost>
<protein>
    <recommendedName>
        <fullName>Structural polyprotein</fullName>
    </recommendedName>
    <alternativeName>
        <fullName>p130</fullName>
    </alternativeName>
    <component>
        <recommendedName>
            <fullName>Capsid protein</fullName>
            <ecNumber evidence="14">3.4.21.90</ecNumber>
        </recommendedName>
        <alternativeName>
            <fullName>Coat protein</fullName>
            <shortName>C</shortName>
        </alternativeName>
    </component>
    <component>
        <recommendedName>
            <fullName>Precursor of protein E3/E2</fullName>
        </recommendedName>
        <alternativeName>
            <fullName>p62</fullName>
        </alternativeName>
        <alternativeName>
            <fullName>pE2</fullName>
        </alternativeName>
    </component>
    <component>
        <recommendedName>
            <fullName>Assembly protein E3</fullName>
        </recommendedName>
    </component>
    <component>
        <recommendedName>
            <fullName>Spike glycoprotein E2</fullName>
        </recommendedName>
        <alternativeName>
            <fullName>E2 envelope glycoprotein</fullName>
        </alternativeName>
    </component>
    <component>
        <recommendedName>
            <fullName>6K protein</fullName>
        </recommendedName>
    </component>
    <component>
        <recommendedName>
            <fullName>Spike glycoprotein E1</fullName>
        </recommendedName>
        <alternativeName>
            <fullName>E1 envelope glycoprotein</fullName>
        </alternativeName>
    </component>
</protein>
<sequence>MNSVFYNPFGRGAYAQPPIAWRPRRRAAPAPRPSGLTTQIQQLTRAVRALVLDNATRRQRPAPRTRPRKPKTQKPKPKKQNQKPPQQQKKGKNQPQQPKKPKPGKRQRTALKFEADRTFVGKNEDGKIMGYAVAMEGKVIKPLHVKGTIDHPALAKLKFTKSSSYDMEFAKLPTEMKSDAFGYTTEHPEVFYNWHHGAVQFSGGRFTIPTGVGGPGDSGRPILDNSGKVVAIVLGGANEVPGTALSVVTWNKKGAAIKTTHEDTVEWSRAITAMCILQNVTFPCDRPPTCYNRNPDLTLTMLETNVNHPSYDVLLDAALRCPTRRHVRSTPTDDFTLTAPYLGLCHRCKTMEPCYSPIKIEKVWDDADDGVLRIQVSAQLGYNRAGTAASARLRFMGGGVPPEIQEGAIADFKVFTSKPCLHLSHKGYFVIVKCPPGDSITTSLKVHGSDQTCTIPMRVGYKFVGREKYTLPPMHGTQIPCLTYERTREKSAGYVTMHRPGQQSITMLMEESGGEVYVQPTSGRNVTYECKCGDFKTGTVTARTKIDGCTERKQCIAISADHVKWVFNSPDLIRHTDHTAQGKLHIPFPLQQAQCTVPLAHLPGVKHAYRSMSLTLHAEHPTLLTTRHLGENPQPTAEWIVGSVTRNFSITIQGFEYTWGNQKPVRVYAQESAPGNPHGWPHEIVRHYYHLYPFYTVTVLSGMGLAICAGLVISILCCCKARRDCLTPYQLAPNATVPFLVTLCCCFQRTSADEFTDTMGYLWQHSQTMFWIQLVIPLAAVITLVRCCSCCLPFLLVASPPNKADAYEHTITVPNAPLNSYKALVERPGYAPLNLEVMVMNTQIIPSVKREYITCRYHTVVPSPQIKCCGTVECPKGEKADYTCKVFTGVYPFLWGGAQCFCDSENSQLSDKYVELSTDCATDHAEAVRVHTASVKSQLRITYGNSTAQVDVFVNGVTPARSKDMKLIAGPLSTTFSPFDNKVIIYHGKVYNYDFPEFGAGTPGAFGDVQASSTTGSDLLANTAIHLQRPEARNIHVPYTQAPSGFEFWKNNSGQPLSDTAPFGCKVNVNPLRADKCAVGSLPISVDIPDAAFTRVSEPLPSLLKCTVTSCTYSTDYGGVLVLTYESDRAGQCAVHSHSSTAVLRDPSVYVEQKGETTLKFSTRSLQADFEVSMCGTRTTCHAQCQPPTEHVMNRPQKSTPDFSSAISKTSWNWITALMGGISSIAAIAAIVLVIALVFTAQHR</sequence>
<reference key="1">
    <citation type="journal article" date="1995" name="Virology">
        <title>Aura virus is a New World representative of Sindbis-like viruses.</title>
        <authorList>
            <person name="Rumenapf T."/>
            <person name="Strauss E.G."/>
            <person name="Strauss J.H."/>
        </authorList>
    </citation>
    <scope>NUCLEOTIDE SEQUENCE [GENOMIC RNA]</scope>
</reference>
<reference key="2">
    <citation type="submission" date="1999-02" db="EMBL/GenBank/DDBJ databases">
        <authorList>
            <person name="Ruemenapf T.H."/>
        </authorList>
    </citation>
    <scope>NUCLEOTIDE SEQUENCE [GENOMIC RNA]</scope>
</reference>
<reference evidence="17" key="3">
    <citation type="journal article" date="2012" name="PLoS ONE">
        <title>Crystal structure of aura virus capsid protease and its complex with dioxane: new insights into capsid-glycoprotein molecular contacts.</title>
        <authorList>
            <person name="Aggarwal M."/>
            <person name="Tapas S."/>
            <person name="Preeti A."/>
            <person name="Siwach A."/>
            <person name="Kumar P."/>
            <person name="Kuhn R.J."/>
            <person name="Tomar S."/>
        </authorList>
    </citation>
    <scope>X-RAY CRYSTALLOGRAPHY (1.81 ANGSTROMS) OF 110-267</scope>
    <scope>DISULFIDE BOND</scope>
</reference>
<reference evidence="18" key="4">
    <citation type="journal article" date="2014" name="J. Virol.">
        <title>trans-Protease activity and structural insights into the active form of the alphavirus capsid protease.</title>
        <authorList>
            <person name="Aggarwal M."/>
            <person name="Dhindwal S."/>
            <person name="Kumar P."/>
            <person name="Kuhn R.J."/>
            <person name="Tomar S."/>
        </authorList>
    </citation>
    <scope>X-RAY CRYSTALLOGRAPHY (1.81 ANGSTROMS) OF 110-265</scope>
    <scope>BIOPHYSICOCHEMICAL PROPERTIES (CAPSID PROTEIN)</scope>
    <scope>FUNCTION (CAPSID PROTEIN)</scope>
    <scope>CATALYTIC ACTIVITY (CAPSID PROTEIN)</scope>
    <scope>ACTIVE SITE (CAPSID PROTEIN)</scope>
</reference>
<proteinExistence type="evidence at protein level"/>
<name>POLS_AURAV</name>
<dbReference type="EC" id="3.4.21.90" evidence="14"/>
<dbReference type="EMBL" id="AF126284">
    <property type="protein sequence ID" value="AAD13623.1"/>
    <property type="molecule type" value="Genomic_RNA"/>
</dbReference>
<dbReference type="RefSeq" id="NP_632024.1">
    <property type="nucleotide sequence ID" value="NC_003900.1"/>
</dbReference>
<dbReference type="PDB" id="4AGJ">
    <property type="method" value="X-ray"/>
    <property type="resolution" value="1.98 A"/>
    <property type="chains" value="A=110-267"/>
</dbReference>
<dbReference type="PDB" id="4AGK">
    <property type="method" value="X-ray"/>
    <property type="resolution" value="1.81 A"/>
    <property type="chains" value="A=110-267"/>
</dbReference>
<dbReference type="PDB" id="4UON">
    <property type="method" value="X-ray"/>
    <property type="resolution" value="1.81 A"/>
    <property type="chains" value="A/B=110-265"/>
</dbReference>
<dbReference type="PDB" id="5G4B">
    <property type="method" value="X-ray"/>
    <property type="resolution" value="2.24 A"/>
    <property type="chains" value="A=110-267"/>
</dbReference>
<dbReference type="PDBsum" id="4AGJ"/>
<dbReference type="PDBsum" id="4AGK"/>
<dbReference type="PDBsum" id="4UON"/>
<dbReference type="PDBsum" id="5G4B"/>
<dbReference type="SMR" id="Q86925"/>
<dbReference type="MEROPS" id="S03.001"/>
<dbReference type="GeneID" id="944526"/>
<dbReference type="KEGG" id="vg:944526"/>
<dbReference type="EvolutionaryTrace" id="Q86925"/>
<dbReference type="Proteomes" id="UP000007442">
    <property type="component" value="Genome"/>
</dbReference>
<dbReference type="GO" id="GO:0030430">
    <property type="term" value="C:host cell cytoplasm"/>
    <property type="evidence" value="ECO:0007669"/>
    <property type="project" value="UniProtKB-SubCell"/>
</dbReference>
<dbReference type="GO" id="GO:0042025">
    <property type="term" value="C:host cell nucleus"/>
    <property type="evidence" value="ECO:0007669"/>
    <property type="project" value="UniProtKB-SubCell"/>
</dbReference>
<dbReference type="GO" id="GO:0020002">
    <property type="term" value="C:host cell plasma membrane"/>
    <property type="evidence" value="ECO:0007669"/>
    <property type="project" value="UniProtKB-SubCell"/>
</dbReference>
<dbReference type="GO" id="GO:0016020">
    <property type="term" value="C:membrane"/>
    <property type="evidence" value="ECO:0007669"/>
    <property type="project" value="UniProtKB-KW"/>
</dbReference>
<dbReference type="GO" id="GO:0039619">
    <property type="term" value="C:T=4 icosahedral viral capsid"/>
    <property type="evidence" value="ECO:0007669"/>
    <property type="project" value="UniProtKB-KW"/>
</dbReference>
<dbReference type="GO" id="GO:0055036">
    <property type="term" value="C:virion membrane"/>
    <property type="evidence" value="ECO:0007669"/>
    <property type="project" value="UniProtKB-SubCell"/>
</dbReference>
<dbReference type="GO" id="GO:0003723">
    <property type="term" value="F:RNA binding"/>
    <property type="evidence" value="ECO:0007669"/>
    <property type="project" value="UniProtKB-KW"/>
</dbReference>
<dbReference type="GO" id="GO:0004252">
    <property type="term" value="F:serine-type endopeptidase activity"/>
    <property type="evidence" value="ECO:0007669"/>
    <property type="project" value="InterPro"/>
</dbReference>
<dbReference type="GO" id="GO:0005198">
    <property type="term" value="F:structural molecule activity"/>
    <property type="evidence" value="ECO:0007669"/>
    <property type="project" value="InterPro"/>
</dbReference>
<dbReference type="GO" id="GO:0039654">
    <property type="term" value="P:fusion of virus membrane with host endosome membrane"/>
    <property type="evidence" value="ECO:0007669"/>
    <property type="project" value="UniProtKB-KW"/>
</dbReference>
<dbReference type="GO" id="GO:0006508">
    <property type="term" value="P:proteolysis"/>
    <property type="evidence" value="ECO:0007669"/>
    <property type="project" value="UniProtKB-KW"/>
</dbReference>
<dbReference type="GO" id="GO:0046718">
    <property type="term" value="P:symbiont entry into host cell"/>
    <property type="evidence" value="ECO:0007669"/>
    <property type="project" value="UniProtKB-KW"/>
</dbReference>
<dbReference type="GO" id="GO:0039722">
    <property type="term" value="P:symbiont-mediated suppression of host toll-like receptor signaling pathway"/>
    <property type="evidence" value="ECO:0000250"/>
    <property type="project" value="UniProtKB"/>
</dbReference>
<dbReference type="GO" id="GO:0019062">
    <property type="term" value="P:virion attachment to host cell"/>
    <property type="evidence" value="ECO:0007669"/>
    <property type="project" value="UniProtKB-KW"/>
</dbReference>
<dbReference type="Gene3D" id="1.10.287.2230">
    <property type="match status" value="1"/>
</dbReference>
<dbReference type="Gene3D" id="2.60.40.350">
    <property type="match status" value="1"/>
</dbReference>
<dbReference type="Gene3D" id="2.60.40.3200">
    <property type="entry name" value="Alphavirus E2 glycoprotein, A domain"/>
    <property type="match status" value="1"/>
</dbReference>
<dbReference type="Gene3D" id="2.60.40.4310">
    <property type="entry name" value="Alphavirus E2 glycoprotein, domain B"/>
    <property type="match status" value="1"/>
</dbReference>
<dbReference type="Gene3D" id="2.60.40.2400">
    <property type="entry name" value="Alphavirus E2 glycoprotein, domain C"/>
    <property type="match status" value="1"/>
</dbReference>
<dbReference type="Gene3D" id="2.60.98.10">
    <property type="entry name" value="Tick-borne Encephalitis virus Glycoprotein, domain 1"/>
    <property type="match status" value="3"/>
</dbReference>
<dbReference type="Gene3D" id="2.40.10.10">
    <property type="entry name" value="Trypsin-like serine proteases"/>
    <property type="match status" value="2"/>
</dbReference>
<dbReference type="InterPro" id="IPR002548">
    <property type="entry name" value="Alpha_E1_glycop"/>
</dbReference>
<dbReference type="InterPro" id="IPR000936">
    <property type="entry name" value="Alpha_E2_glycop"/>
</dbReference>
<dbReference type="InterPro" id="IPR002533">
    <property type="entry name" value="Alpha_E3_glycop"/>
</dbReference>
<dbReference type="InterPro" id="IPR042304">
    <property type="entry name" value="Alphavir_E2_A"/>
</dbReference>
<dbReference type="InterPro" id="IPR042305">
    <property type="entry name" value="Alphavir_E2_B"/>
</dbReference>
<dbReference type="InterPro" id="IPR042306">
    <property type="entry name" value="Alphavir_E2_C"/>
</dbReference>
<dbReference type="InterPro" id="IPR000336">
    <property type="entry name" value="Flavivir/Alphavir_Ig-like_sf"/>
</dbReference>
<dbReference type="InterPro" id="IPR036253">
    <property type="entry name" value="Glycoprot_cen/dimer_sf"/>
</dbReference>
<dbReference type="InterPro" id="IPR038055">
    <property type="entry name" value="Glycoprot_E_dimer_dom"/>
</dbReference>
<dbReference type="InterPro" id="IPR014756">
    <property type="entry name" value="Ig_E-set"/>
</dbReference>
<dbReference type="InterPro" id="IPR009003">
    <property type="entry name" value="Peptidase_S1_PA"/>
</dbReference>
<dbReference type="InterPro" id="IPR043504">
    <property type="entry name" value="Peptidase_S1_PA_chymotrypsin"/>
</dbReference>
<dbReference type="InterPro" id="IPR000930">
    <property type="entry name" value="Peptidase_S3"/>
</dbReference>
<dbReference type="Pfam" id="PF01589">
    <property type="entry name" value="Alpha_E1_glycop"/>
    <property type="match status" value="1"/>
</dbReference>
<dbReference type="Pfam" id="PF00943">
    <property type="entry name" value="Alpha_E2_glycop"/>
    <property type="match status" value="1"/>
</dbReference>
<dbReference type="Pfam" id="PF01563">
    <property type="entry name" value="Alpha_E3_glycop"/>
    <property type="match status" value="1"/>
</dbReference>
<dbReference type="Pfam" id="PF00944">
    <property type="entry name" value="Peptidase_S3"/>
    <property type="match status" value="1"/>
</dbReference>
<dbReference type="PRINTS" id="PR00798">
    <property type="entry name" value="TOGAVIRIN"/>
</dbReference>
<dbReference type="SUPFAM" id="SSF81296">
    <property type="entry name" value="E set domains"/>
    <property type="match status" value="1"/>
</dbReference>
<dbReference type="SUPFAM" id="SSF50494">
    <property type="entry name" value="Trypsin-like serine proteases"/>
    <property type="match status" value="1"/>
</dbReference>
<dbReference type="SUPFAM" id="SSF56983">
    <property type="entry name" value="Viral glycoprotein, central and dimerisation domains"/>
    <property type="match status" value="1"/>
</dbReference>
<dbReference type="PROSITE" id="PS51690">
    <property type="entry name" value="ALPHAVIRUS_CP"/>
    <property type="match status" value="1"/>
</dbReference>
<evidence type="ECO:0000250" key="1"/>
<evidence type="ECO:0000250" key="2">
    <source>
        <dbReference type="UniProtKB" id="P03315"/>
    </source>
</evidence>
<evidence type="ECO:0000250" key="3">
    <source>
        <dbReference type="UniProtKB" id="P03316"/>
    </source>
</evidence>
<evidence type="ECO:0000250" key="4">
    <source>
        <dbReference type="UniProtKB" id="P09592"/>
    </source>
</evidence>
<evidence type="ECO:0000250" key="5">
    <source>
        <dbReference type="UniProtKB" id="P0DOK1"/>
    </source>
</evidence>
<evidence type="ECO:0000250" key="6">
    <source>
        <dbReference type="UniProtKB" id="P27284"/>
    </source>
</evidence>
<evidence type="ECO:0000250" key="7">
    <source>
        <dbReference type="UniProtKB" id="Q5XXP3"/>
    </source>
</evidence>
<evidence type="ECO:0000250" key="8">
    <source>
        <dbReference type="UniProtKB" id="Q5Y388"/>
    </source>
</evidence>
<evidence type="ECO:0000250" key="9">
    <source>
        <dbReference type="UniProtKB" id="Q8JUX5"/>
    </source>
</evidence>
<evidence type="ECO:0000255" key="10"/>
<evidence type="ECO:0000255" key="11">
    <source>
        <dbReference type="PROSITE-ProRule" id="PRU01027"/>
    </source>
</evidence>
<evidence type="ECO:0000256" key="12">
    <source>
        <dbReference type="SAM" id="MobiDB-lite"/>
    </source>
</evidence>
<evidence type="ECO:0000269" key="13">
    <source>
    </source>
</evidence>
<evidence type="ECO:0000269" key="14">
    <source>
    </source>
</evidence>
<evidence type="ECO:0000305" key="15"/>
<evidence type="ECO:0000305" key="16">
    <source>
    </source>
</evidence>
<evidence type="ECO:0007744" key="17">
    <source>
        <dbReference type="PDB" id="4AGJ"/>
    </source>
</evidence>
<evidence type="ECO:0007744" key="18">
    <source>
        <dbReference type="PDB" id="4UON"/>
    </source>
</evidence>
<evidence type="ECO:0007829" key="19">
    <source>
        <dbReference type="PDB" id="4AGK"/>
    </source>
</evidence>
<evidence type="ECO:0007829" key="20">
    <source>
        <dbReference type="PDB" id="4UON"/>
    </source>
</evidence>
<organism>
    <name type="scientific">Aura virus</name>
    <name type="common">AURAV</name>
    <dbReference type="NCBI Taxonomy" id="44158"/>
    <lineage>
        <taxon>Viruses</taxon>
        <taxon>Riboviria</taxon>
        <taxon>Orthornavirae</taxon>
        <taxon>Kitrinoviricota</taxon>
        <taxon>Alsuviricetes</taxon>
        <taxon>Martellivirales</taxon>
        <taxon>Togaviridae</taxon>
        <taxon>Alphavirus</taxon>
    </lineage>
</organism>